<comment type="function">
    <text evidence="1">The glycine cleavage system catalyzes the degradation of glycine. The H protein shuttles the methylamine group of glycine from the P protein to the T protein.</text>
</comment>
<comment type="cofactor">
    <cofactor evidence="1">
        <name>(R)-lipoate</name>
        <dbReference type="ChEBI" id="CHEBI:83088"/>
    </cofactor>
    <text evidence="1">Binds 1 lipoyl cofactor covalently.</text>
</comment>
<comment type="subunit">
    <text evidence="1">The glycine cleavage system is composed of four proteins: P, T, L and H.</text>
</comment>
<comment type="similarity">
    <text evidence="1">Belongs to the GcvH family.</text>
</comment>
<keyword id="KW-0450">Lipoyl</keyword>
<organism>
    <name type="scientific">Hydrogenovibrio crunogenus (strain DSM 25203 / XCL-2)</name>
    <name type="common">Thiomicrospira crunogena</name>
    <dbReference type="NCBI Taxonomy" id="317025"/>
    <lineage>
        <taxon>Bacteria</taxon>
        <taxon>Pseudomonadati</taxon>
        <taxon>Pseudomonadota</taxon>
        <taxon>Gammaproteobacteria</taxon>
        <taxon>Thiotrichales</taxon>
        <taxon>Piscirickettsiaceae</taxon>
        <taxon>Hydrogenovibrio</taxon>
    </lineage>
</organism>
<name>GCSH_HYDCU</name>
<proteinExistence type="inferred from homology"/>
<evidence type="ECO:0000255" key="1">
    <source>
        <dbReference type="HAMAP-Rule" id="MF_00272"/>
    </source>
</evidence>
<evidence type="ECO:0000255" key="2">
    <source>
        <dbReference type="PROSITE-ProRule" id="PRU01066"/>
    </source>
</evidence>
<gene>
    <name evidence="1" type="primary">gcvH</name>
    <name type="ordered locus">Tcr_1850</name>
</gene>
<feature type="chain" id="PRO_1000022207" description="Glycine cleavage system H protein">
    <location>
        <begin position="1"/>
        <end position="129"/>
    </location>
</feature>
<feature type="domain" description="Lipoyl-binding" evidence="2">
    <location>
        <begin position="24"/>
        <end position="106"/>
    </location>
</feature>
<feature type="modified residue" description="N6-lipoyllysine" evidence="1">
    <location>
        <position position="65"/>
    </location>
</feature>
<accession>Q31EI1</accession>
<protein>
    <recommendedName>
        <fullName evidence="1">Glycine cleavage system H protein</fullName>
    </recommendedName>
</protein>
<reference key="1">
    <citation type="journal article" date="2006" name="PLoS Biol.">
        <title>The genome of deep-sea vent chemolithoautotroph Thiomicrospira crunogena XCL-2.</title>
        <authorList>
            <person name="Scott K.M."/>
            <person name="Sievert S.M."/>
            <person name="Abril F.N."/>
            <person name="Ball L.A."/>
            <person name="Barrett C.J."/>
            <person name="Blake R.A."/>
            <person name="Boller A.J."/>
            <person name="Chain P.S.G."/>
            <person name="Clark J.A."/>
            <person name="Davis C.R."/>
            <person name="Detter C."/>
            <person name="Do K.F."/>
            <person name="Dobrinski K.P."/>
            <person name="Faza B.I."/>
            <person name="Fitzpatrick K.A."/>
            <person name="Freyermuth S.K."/>
            <person name="Harmer T.L."/>
            <person name="Hauser L.J."/>
            <person name="Huegler M."/>
            <person name="Kerfeld C.A."/>
            <person name="Klotz M.G."/>
            <person name="Kong W.W."/>
            <person name="Land M."/>
            <person name="Lapidus A."/>
            <person name="Larimer F.W."/>
            <person name="Longo D.L."/>
            <person name="Lucas S."/>
            <person name="Malfatti S.A."/>
            <person name="Massey S.E."/>
            <person name="Martin D.D."/>
            <person name="McCuddin Z."/>
            <person name="Meyer F."/>
            <person name="Moore J.L."/>
            <person name="Ocampo L.H. Jr."/>
            <person name="Paul J.H."/>
            <person name="Paulsen I.T."/>
            <person name="Reep D.K."/>
            <person name="Ren Q."/>
            <person name="Ross R.L."/>
            <person name="Sato P.Y."/>
            <person name="Thomas P."/>
            <person name="Tinkham L.E."/>
            <person name="Zeruth G.T."/>
        </authorList>
    </citation>
    <scope>NUCLEOTIDE SEQUENCE [LARGE SCALE GENOMIC DNA]</scope>
    <source>
        <strain>DSM 25203 / XCL-2</strain>
    </source>
</reference>
<sequence length="129" mass="14235">MSVLPSHLKYADSHEWVYLDEEGHAVVGITDFAQESLGDLMDVHLPEVGADIDQGEEIMSLESVKAASDIFSPLSGEVVAVNTELEDEPERVNDEPYDGGWLFKLAPHDLSEMDDLLSDVDYQGLIDQS</sequence>
<dbReference type="EMBL" id="CP000109">
    <property type="protein sequence ID" value="ABB42442.1"/>
    <property type="molecule type" value="Genomic_DNA"/>
</dbReference>
<dbReference type="SMR" id="Q31EI1"/>
<dbReference type="STRING" id="317025.Tcr_1850"/>
<dbReference type="KEGG" id="tcx:Tcr_1850"/>
<dbReference type="eggNOG" id="COG0509">
    <property type="taxonomic scope" value="Bacteria"/>
</dbReference>
<dbReference type="HOGENOM" id="CLU_097408_2_2_6"/>
<dbReference type="OrthoDB" id="9796712at2"/>
<dbReference type="GO" id="GO:0005829">
    <property type="term" value="C:cytosol"/>
    <property type="evidence" value="ECO:0007669"/>
    <property type="project" value="TreeGrafter"/>
</dbReference>
<dbReference type="GO" id="GO:0005960">
    <property type="term" value="C:glycine cleavage complex"/>
    <property type="evidence" value="ECO:0007669"/>
    <property type="project" value="InterPro"/>
</dbReference>
<dbReference type="GO" id="GO:0019464">
    <property type="term" value="P:glycine decarboxylation via glycine cleavage system"/>
    <property type="evidence" value="ECO:0007669"/>
    <property type="project" value="UniProtKB-UniRule"/>
</dbReference>
<dbReference type="CDD" id="cd06848">
    <property type="entry name" value="GCS_H"/>
    <property type="match status" value="1"/>
</dbReference>
<dbReference type="Gene3D" id="2.40.50.100">
    <property type="match status" value="1"/>
</dbReference>
<dbReference type="HAMAP" id="MF_00272">
    <property type="entry name" value="GcvH"/>
    <property type="match status" value="1"/>
</dbReference>
<dbReference type="InterPro" id="IPR003016">
    <property type="entry name" value="2-oxoA_DH_lipoyl-BS"/>
</dbReference>
<dbReference type="InterPro" id="IPR000089">
    <property type="entry name" value="Biotin_lipoyl"/>
</dbReference>
<dbReference type="InterPro" id="IPR002930">
    <property type="entry name" value="GCV_H"/>
</dbReference>
<dbReference type="InterPro" id="IPR033753">
    <property type="entry name" value="GCV_H/Fam206"/>
</dbReference>
<dbReference type="InterPro" id="IPR017453">
    <property type="entry name" value="GCV_H_sub"/>
</dbReference>
<dbReference type="InterPro" id="IPR011053">
    <property type="entry name" value="Single_hybrid_motif"/>
</dbReference>
<dbReference type="NCBIfam" id="TIGR00527">
    <property type="entry name" value="gcvH"/>
    <property type="match status" value="1"/>
</dbReference>
<dbReference type="NCBIfam" id="NF002270">
    <property type="entry name" value="PRK01202.1"/>
    <property type="match status" value="1"/>
</dbReference>
<dbReference type="PANTHER" id="PTHR11715">
    <property type="entry name" value="GLYCINE CLEAVAGE SYSTEM H PROTEIN"/>
    <property type="match status" value="1"/>
</dbReference>
<dbReference type="PANTHER" id="PTHR11715:SF3">
    <property type="entry name" value="GLYCINE CLEAVAGE SYSTEM H PROTEIN-RELATED"/>
    <property type="match status" value="1"/>
</dbReference>
<dbReference type="Pfam" id="PF01597">
    <property type="entry name" value="GCV_H"/>
    <property type="match status" value="1"/>
</dbReference>
<dbReference type="SUPFAM" id="SSF51230">
    <property type="entry name" value="Single hybrid motif"/>
    <property type="match status" value="1"/>
</dbReference>
<dbReference type="PROSITE" id="PS50968">
    <property type="entry name" value="BIOTINYL_LIPOYL"/>
    <property type="match status" value="1"/>
</dbReference>
<dbReference type="PROSITE" id="PS00189">
    <property type="entry name" value="LIPOYL"/>
    <property type="match status" value="1"/>
</dbReference>